<evidence type="ECO:0000255" key="1">
    <source>
        <dbReference type="HAMAP-Rule" id="MF_00051"/>
    </source>
</evidence>
<protein>
    <recommendedName>
        <fullName evidence="1">Serine hydroxymethyltransferase</fullName>
        <shortName evidence="1">SHMT</shortName>
        <shortName evidence="1">Serine methylase</shortName>
        <ecNumber evidence="1">2.1.2.1</ecNumber>
    </recommendedName>
</protein>
<feature type="chain" id="PRO_0000235031" description="Serine hydroxymethyltransferase">
    <location>
        <begin position="1"/>
        <end position="420"/>
    </location>
</feature>
<feature type="binding site" evidence="1">
    <location>
        <position position="123"/>
    </location>
    <ligand>
        <name>(6S)-5,6,7,8-tetrahydrofolate</name>
        <dbReference type="ChEBI" id="CHEBI:57453"/>
    </ligand>
</feature>
<feature type="binding site" evidence="1">
    <location>
        <begin position="127"/>
        <end position="129"/>
    </location>
    <ligand>
        <name>(6S)-5,6,7,8-tetrahydrofolate</name>
        <dbReference type="ChEBI" id="CHEBI:57453"/>
    </ligand>
</feature>
<feature type="binding site" evidence="1">
    <location>
        <begin position="357"/>
        <end position="359"/>
    </location>
    <ligand>
        <name>(6S)-5,6,7,8-tetrahydrofolate</name>
        <dbReference type="ChEBI" id="CHEBI:57453"/>
    </ligand>
</feature>
<feature type="site" description="Plays an important role in substrate specificity" evidence="1">
    <location>
        <position position="231"/>
    </location>
</feature>
<feature type="modified residue" description="N6-(pyridoxal phosphate)lysine" evidence="1">
    <location>
        <position position="232"/>
    </location>
</feature>
<name>GLYA_STRPM</name>
<organism>
    <name type="scientific">Streptococcus pyogenes serotype M28 (strain MGAS6180)</name>
    <dbReference type="NCBI Taxonomy" id="319701"/>
    <lineage>
        <taxon>Bacteria</taxon>
        <taxon>Bacillati</taxon>
        <taxon>Bacillota</taxon>
        <taxon>Bacilli</taxon>
        <taxon>Lactobacillales</taxon>
        <taxon>Streptococcaceae</taxon>
        <taxon>Streptococcus</taxon>
    </lineage>
</organism>
<keyword id="KW-0028">Amino-acid biosynthesis</keyword>
<keyword id="KW-0963">Cytoplasm</keyword>
<keyword id="KW-0554">One-carbon metabolism</keyword>
<keyword id="KW-0663">Pyridoxal phosphate</keyword>
<keyword id="KW-0808">Transferase</keyword>
<accession>Q48TK6</accession>
<proteinExistence type="inferred from homology"/>
<reference key="1">
    <citation type="journal article" date="2005" name="J. Infect. Dis.">
        <title>Genome sequence of a serotype M28 strain of group A Streptococcus: potential new insights into puerperal sepsis and bacterial disease specificity.</title>
        <authorList>
            <person name="Green N.M."/>
            <person name="Zhang S."/>
            <person name="Porcella S.F."/>
            <person name="Nagiec M.J."/>
            <person name="Barbian K.D."/>
            <person name="Beres S.B."/>
            <person name="Lefebvre R.B."/>
            <person name="Musser J.M."/>
        </authorList>
    </citation>
    <scope>NUCLEOTIDE SEQUENCE [LARGE SCALE GENOMIC DNA]</scope>
    <source>
        <strain>MGAS6180</strain>
    </source>
</reference>
<sequence length="420" mass="45320">MTMIFDKGNVEDFDKELWDAIHAEEERQEHHIELIASENMVSKAVMAAQGSVLTNKYAEGYPGNRYYGGTECVDIVETLAIERAKKLFGAAFANVQAHSGSQANAAAYMALIEAGDTVLGMDLAAGGHLTHGSPVNFSGKTYHFVGYSVDADTEMLNYEAILEQAKAVQPKLIVAGASAYSRSIDFEKFRAIADHVGAYLMVDMAHIAGLVAAGVHPSPVHYAHIVTSTTHKTLRGPRGGLILTNDEALAKKINSAVFPGLQGGPLEHVIAAKAVAFKEALDPAFKDYAQAIIDNTAAMAAVFAQDDRFRLISGGTDNHVFLVDVTKVIANGKLAQNLLDEVNITLNKNAIPFETLSPFKTSGIRIGCAAITSRGMGVKESQTIAHLIIKALVNHDQETILEEVRQEVRQLTDAFPLYKK</sequence>
<comment type="function">
    <text evidence="1">Catalyzes the reversible interconversion of serine and glycine with tetrahydrofolate (THF) serving as the one-carbon carrier. This reaction serves as the major source of one-carbon groups required for the biosynthesis of purines, thymidylate, methionine, and other important biomolecules. Also exhibits THF-independent aldolase activity toward beta-hydroxyamino acids, producing glycine and aldehydes, via a retro-aldol mechanism.</text>
</comment>
<comment type="catalytic activity">
    <reaction evidence="1">
        <text>(6R)-5,10-methylene-5,6,7,8-tetrahydrofolate + glycine + H2O = (6S)-5,6,7,8-tetrahydrofolate + L-serine</text>
        <dbReference type="Rhea" id="RHEA:15481"/>
        <dbReference type="ChEBI" id="CHEBI:15377"/>
        <dbReference type="ChEBI" id="CHEBI:15636"/>
        <dbReference type="ChEBI" id="CHEBI:33384"/>
        <dbReference type="ChEBI" id="CHEBI:57305"/>
        <dbReference type="ChEBI" id="CHEBI:57453"/>
        <dbReference type="EC" id="2.1.2.1"/>
    </reaction>
</comment>
<comment type="cofactor">
    <cofactor evidence="1">
        <name>pyridoxal 5'-phosphate</name>
        <dbReference type="ChEBI" id="CHEBI:597326"/>
    </cofactor>
</comment>
<comment type="pathway">
    <text evidence="1">One-carbon metabolism; tetrahydrofolate interconversion.</text>
</comment>
<comment type="pathway">
    <text evidence="1">Amino-acid biosynthesis; glycine biosynthesis; glycine from L-serine: step 1/1.</text>
</comment>
<comment type="subunit">
    <text evidence="1">Homodimer.</text>
</comment>
<comment type="subcellular location">
    <subcellularLocation>
        <location evidence="1">Cytoplasm</location>
    </subcellularLocation>
</comment>
<comment type="similarity">
    <text evidence="1">Belongs to the SHMT family.</text>
</comment>
<dbReference type="EC" id="2.1.2.1" evidence="1"/>
<dbReference type="EMBL" id="CP000056">
    <property type="protein sequence ID" value="AAX71954.1"/>
    <property type="molecule type" value="Genomic_DNA"/>
</dbReference>
<dbReference type="SMR" id="Q48TK6"/>
<dbReference type="KEGG" id="spb:M28_Spy0841"/>
<dbReference type="HOGENOM" id="CLU_022477_2_1_9"/>
<dbReference type="UniPathway" id="UPA00193"/>
<dbReference type="UniPathway" id="UPA00288">
    <property type="reaction ID" value="UER01023"/>
</dbReference>
<dbReference type="GO" id="GO:0005829">
    <property type="term" value="C:cytosol"/>
    <property type="evidence" value="ECO:0007669"/>
    <property type="project" value="TreeGrafter"/>
</dbReference>
<dbReference type="GO" id="GO:0004372">
    <property type="term" value="F:glycine hydroxymethyltransferase activity"/>
    <property type="evidence" value="ECO:0007669"/>
    <property type="project" value="UniProtKB-UniRule"/>
</dbReference>
<dbReference type="GO" id="GO:0030170">
    <property type="term" value="F:pyridoxal phosphate binding"/>
    <property type="evidence" value="ECO:0007669"/>
    <property type="project" value="UniProtKB-UniRule"/>
</dbReference>
<dbReference type="GO" id="GO:0019264">
    <property type="term" value="P:glycine biosynthetic process from serine"/>
    <property type="evidence" value="ECO:0007669"/>
    <property type="project" value="UniProtKB-UniRule"/>
</dbReference>
<dbReference type="GO" id="GO:0035999">
    <property type="term" value="P:tetrahydrofolate interconversion"/>
    <property type="evidence" value="ECO:0007669"/>
    <property type="project" value="UniProtKB-UniRule"/>
</dbReference>
<dbReference type="CDD" id="cd00378">
    <property type="entry name" value="SHMT"/>
    <property type="match status" value="1"/>
</dbReference>
<dbReference type="FunFam" id="3.40.640.10:FF:000001">
    <property type="entry name" value="Serine hydroxymethyltransferase"/>
    <property type="match status" value="1"/>
</dbReference>
<dbReference type="Gene3D" id="3.90.1150.10">
    <property type="entry name" value="Aspartate Aminotransferase, domain 1"/>
    <property type="match status" value="1"/>
</dbReference>
<dbReference type="Gene3D" id="3.40.640.10">
    <property type="entry name" value="Type I PLP-dependent aspartate aminotransferase-like (Major domain)"/>
    <property type="match status" value="1"/>
</dbReference>
<dbReference type="HAMAP" id="MF_00051">
    <property type="entry name" value="SHMT"/>
    <property type="match status" value="1"/>
</dbReference>
<dbReference type="InterPro" id="IPR015424">
    <property type="entry name" value="PyrdxlP-dep_Trfase"/>
</dbReference>
<dbReference type="InterPro" id="IPR015421">
    <property type="entry name" value="PyrdxlP-dep_Trfase_major"/>
</dbReference>
<dbReference type="InterPro" id="IPR015422">
    <property type="entry name" value="PyrdxlP-dep_Trfase_small"/>
</dbReference>
<dbReference type="InterPro" id="IPR001085">
    <property type="entry name" value="Ser_HO-MeTrfase"/>
</dbReference>
<dbReference type="InterPro" id="IPR049943">
    <property type="entry name" value="Ser_HO-MeTrfase-like"/>
</dbReference>
<dbReference type="InterPro" id="IPR019798">
    <property type="entry name" value="Ser_HO-MeTrfase_PLP_BS"/>
</dbReference>
<dbReference type="InterPro" id="IPR039429">
    <property type="entry name" value="SHMT-like_dom"/>
</dbReference>
<dbReference type="NCBIfam" id="NF000586">
    <property type="entry name" value="PRK00011.1"/>
    <property type="match status" value="1"/>
</dbReference>
<dbReference type="PANTHER" id="PTHR11680">
    <property type="entry name" value="SERINE HYDROXYMETHYLTRANSFERASE"/>
    <property type="match status" value="1"/>
</dbReference>
<dbReference type="PANTHER" id="PTHR11680:SF35">
    <property type="entry name" value="SERINE HYDROXYMETHYLTRANSFERASE 1"/>
    <property type="match status" value="1"/>
</dbReference>
<dbReference type="Pfam" id="PF00464">
    <property type="entry name" value="SHMT"/>
    <property type="match status" value="1"/>
</dbReference>
<dbReference type="PIRSF" id="PIRSF000412">
    <property type="entry name" value="SHMT"/>
    <property type="match status" value="1"/>
</dbReference>
<dbReference type="SUPFAM" id="SSF53383">
    <property type="entry name" value="PLP-dependent transferases"/>
    <property type="match status" value="1"/>
</dbReference>
<dbReference type="PROSITE" id="PS00096">
    <property type="entry name" value="SHMT"/>
    <property type="match status" value="1"/>
</dbReference>
<gene>
    <name evidence="1" type="primary">glyA</name>
    <name type="ordered locus">M28_Spy0841</name>
</gene>